<organism>
    <name type="scientific">Xenopus laevis</name>
    <name type="common">African clawed frog</name>
    <dbReference type="NCBI Taxonomy" id="8355"/>
    <lineage>
        <taxon>Eukaryota</taxon>
        <taxon>Metazoa</taxon>
        <taxon>Chordata</taxon>
        <taxon>Craniata</taxon>
        <taxon>Vertebrata</taxon>
        <taxon>Euteleostomi</taxon>
        <taxon>Amphibia</taxon>
        <taxon>Batrachia</taxon>
        <taxon>Anura</taxon>
        <taxon>Pipoidea</taxon>
        <taxon>Pipidae</taxon>
        <taxon>Xenopodinae</taxon>
        <taxon>Xenopus</taxon>
        <taxon>Xenopus</taxon>
    </lineage>
</organism>
<dbReference type="EC" id="2.3.2.27"/>
<dbReference type="EMBL" id="AY781409">
    <property type="protein sequence ID" value="AAX10105.1"/>
    <property type="molecule type" value="mRNA"/>
</dbReference>
<dbReference type="RefSeq" id="NP_001089077.1">
    <property type="nucleotide sequence ID" value="NM_001095608.1"/>
</dbReference>
<dbReference type="SMR" id="Q56R14"/>
<dbReference type="BioGRID" id="591680">
    <property type="interactions" value="2"/>
</dbReference>
<dbReference type="IntAct" id="Q56R14">
    <property type="interactions" value="3"/>
</dbReference>
<dbReference type="GeneID" id="733198"/>
<dbReference type="KEGG" id="xla:733198"/>
<dbReference type="AGR" id="Xenbase:XB-GENE-1216172"/>
<dbReference type="CTD" id="733198"/>
<dbReference type="Xenbase" id="XB-GENE-1216172">
    <property type="gene designation" value="trim33.L"/>
</dbReference>
<dbReference type="OrthoDB" id="1870062at2759"/>
<dbReference type="UniPathway" id="UPA00143"/>
<dbReference type="Proteomes" id="UP000186698">
    <property type="component" value="Chromosome 2L"/>
</dbReference>
<dbReference type="Bgee" id="733198">
    <property type="expression patterns" value="Expressed in blastula and 19 other cell types or tissues"/>
</dbReference>
<dbReference type="GO" id="GO:0000785">
    <property type="term" value="C:chromatin"/>
    <property type="evidence" value="ECO:0000318"/>
    <property type="project" value="GO_Central"/>
</dbReference>
<dbReference type="GO" id="GO:0005634">
    <property type="term" value="C:nucleus"/>
    <property type="evidence" value="ECO:0000250"/>
    <property type="project" value="UniProtKB"/>
</dbReference>
<dbReference type="GO" id="GO:0003677">
    <property type="term" value="F:DNA binding"/>
    <property type="evidence" value="ECO:0007669"/>
    <property type="project" value="UniProtKB-KW"/>
</dbReference>
<dbReference type="GO" id="GO:0016740">
    <property type="term" value="F:transferase activity"/>
    <property type="evidence" value="ECO:0007669"/>
    <property type="project" value="UniProtKB-KW"/>
</dbReference>
<dbReference type="GO" id="GO:0008270">
    <property type="term" value="F:zinc ion binding"/>
    <property type="evidence" value="ECO:0007669"/>
    <property type="project" value="UniProtKB-KW"/>
</dbReference>
<dbReference type="GO" id="GO:0016567">
    <property type="term" value="P:protein ubiquitination"/>
    <property type="evidence" value="ECO:0007669"/>
    <property type="project" value="UniProtKB-UniPathway"/>
</dbReference>
<dbReference type="CDD" id="cd19847">
    <property type="entry name" value="Bbox1_TIF1g_C-VI"/>
    <property type="match status" value="1"/>
</dbReference>
<dbReference type="CDD" id="cd19830">
    <property type="entry name" value="Bbox2_TIF1g_C-VI"/>
    <property type="match status" value="1"/>
</dbReference>
<dbReference type="CDD" id="cd05502">
    <property type="entry name" value="Bromo_tif1_like"/>
    <property type="match status" value="1"/>
</dbReference>
<dbReference type="CDD" id="cd15624">
    <property type="entry name" value="PHD_TIF1gamma"/>
    <property type="match status" value="1"/>
</dbReference>
<dbReference type="CDD" id="cd16766">
    <property type="entry name" value="RING-HC_TIF1gamma"/>
    <property type="match status" value="1"/>
</dbReference>
<dbReference type="FunFam" id="3.30.40.10:FF:000123">
    <property type="entry name" value="E3 ubiquitin-protein ligase TRIM33"/>
    <property type="match status" value="1"/>
</dbReference>
<dbReference type="FunFam" id="3.30.40.10:FF:000246">
    <property type="entry name" value="E3 ubiquitin-protein ligase TRIM33 isoform X2"/>
    <property type="match status" value="1"/>
</dbReference>
<dbReference type="FunFam" id="1.20.920.10:FF:000024">
    <property type="entry name" value="Transcription intermediary factor 1-alpha"/>
    <property type="match status" value="1"/>
</dbReference>
<dbReference type="FunFam" id="3.30.160.60:FF:000074">
    <property type="entry name" value="Tripartite motif containing 66"/>
    <property type="match status" value="1"/>
</dbReference>
<dbReference type="Gene3D" id="4.10.830.40">
    <property type="match status" value="1"/>
</dbReference>
<dbReference type="Gene3D" id="1.20.920.10">
    <property type="entry name" value="Bromodomain-like"/>
    <property type="match status" value="1"/>
</dbReference>
<dbReference type="Gene3D" id="3.30.160.60">
    <property type="entry name" value="Classic Zinc Finger"/>
    <property type="match status" value="1"/>
</dbReference>
<dbReference type="Gene3D" id="3.30.40.10">
    <property type="entry name" value="Zinc/RING finger domain, C3HC4 (zinc finger)"/>
    <property type="match status" value="2"/>
</dbReference>
<dbReference type="InterPro" id="IPR003649">
    <property type="entry name" value="Bbox_C"/>
</dbReference>
<dbReference type="InterPro" id="IPR001487">
    <property type="entry name" value="Bromodomain"/>
</dbReference>
<dbReference type="InterPro" id="IPR036427">
    <property type="entry name" value="Bromodomain-like_sf"/>
</dbReference>
<dbReference type="InterPro" id="IPR019786">
    <property type="entry name" value="Zinc_finger_PHD-type_CS"/>
</dbReference>
<dbReference type="InterPro" id="IPR000315">
    <property type="entry name" value="Znf_B-box"/>
</dbReference>
<dbReference type="InterPro" id="IPR011011">
    <property type="entry name" value="Znf_FYVE_PHD"/>
</dbReference>
<dbReference type="InterPro" id="IPR001965">
    <property type="entry name" value="Znf_PHD"/>
</dbReference>
<dbReference type="InterPro" id="IPR019787">
    <property type="entry name" value="Znf_PHD-finger"/>
</dbReference>
<dbReference type="InterPro" id="IPR001841">
    <property type="entry name" value="Znf_RING"/>
</dbReference>
<dbReference type="InterPro" id="IPR013083">
    <property type="entry name" value="Znf_RING/FYVE/PHD"/>
</dbReference>
<dbReference type="InterPro" id="IPR017907">
    <property type="entry name" value="Znf_RING_CS"/>
</dbReference>
<dbReference type="PANTHER" id="PTHR45915:SF3">
    <property type="entry name" value="E3 UBIQUITIN-PROTEIN LIGASE TRIM33"/>
    <property type="match status" value="1"/>
</dbReference>
<dbReference type="PANTHER" id="PTHR45915">
    <property type="entry name" value="TRANSCRIPTION INTERMEDIARY FACTOR"/>
    <property type="match status" value="1"/>
</dbReference>
<dbReference type="Pfam" id="PF00439">
    <property type="entry name" value="Bromodomain"/>
    <property type="match status" value="1"/>
</dbReference>
<dbReference type="Pfam" id="PF00628">
    <property type="entry name" value="PHD"/>
    <property type="match status" value="1"/>
</dbReference>
<dbReference type="Pfam" id="PF00643">
    <property type="entry name" value="zf-B_box"/>
    <property type="match status" value="1"/>
</dbReference>
<dbReference type="SMART" id="SM00502">
    <property type="entry name" value="BBC"/>
    <property type="match status" value="1"/>
</dbReference>
<dbReference type="SMART" id="SM00336">
    <property type="entry name" value="BBOX"/>
    <property type="match status" value="2"/>
</dbReference>
<dbReference type="SMART" id="SM00297">
    <property type="entry name" value="BROMO"/>
    <property type="match status" value="1"/>
</dbReference>
<dbReference type="SMART" id="SM00249">
    <property type="entry name" value="PHD"/>
    <property type="match status" value="1"/>
</dbReference>
<dbReference type="SMART" id="SM00184">
    <property type="entry name" value="RING"/>
    <property type="match status" value="2"/>
</dbReference>
<dbReference type="SUPFAM" id="SSF57845">
    <property type="entry name" value="B-box zinc-binding domain"/>
    <property type="match status" value="1"/>
</dbReference>
<dbReference type="SUPFAM" id="SSF47370">
    <property type="entry name" value="Bromodomain"/>
    <property type="match status" value="1"/>
</dbReference>
<dbReference type="SUPFAM" id="SSF57903">
    <property type="entry name" value="FYVE/PHD zinc finger"/>
    <property type="match status" value="1"/>
</dbReference>
<dbReference type="SUPFAM" id="SSF57850">
    <property type="entry name" value="RING/U-box"/>
    <property type="match status" value="1"/>
</dbReference>
<dbReference type="PROSITE" id="PS50014">
    <property type="entry name" value="BROMODOMAIN_2"/>
    <property type="match status" value="1"/>
</dbReference>
<dbReference type="PROSITE" id="PS50119">
    <property type="entry name" value="ZF_BBOX"/>
    <property type="match status" value="2"/>
</dbReference>
<dbReference type="PROSITE" id="PS01359">
    <property type="entry name" value="ZF_PHD_1"/>
    <property type="match status" value="1"/>
</dbReference>
<dbReference type="PROSITE" id="PS50016">
    <property type="entry name" value="ZF_PHD_2"/>
    <property type="match status" value="1"/>
</dbReference>
<dbReference type="PROSITE" id="PS00518">
    <property type="entry name" value="ZF_RING_1"/>
    <property type="match status" value="1"/>
</dbReference>
<dbReference type="PROSITE" id="PS50089">
    <property type="entry name" value="ZF_RING_2"/>
    <property type="match status" value="1"/>
</dbReference>
<reference key="1">
    <citation type="journal article" date="2005" name="Cell">
        <title>Germ-layer specification and control of cell growth by Ectodermin, a Smad4 ubiquitin ligase.</title>
        <authorList>
            <person name="Dupont S."/>
            <person name="Zacchigna L."/>
            <person name="Cordenonsi M."/>
            <person name="Soligo S."/>
            <person name="Adorno M."/>
            <person name="Rugge M."/>
            <person name="Piccolo S."/>
        </authorList>
    </citation>
    <scope>NUCLEOTIDE SEQUENCE [MRNA]</scope>
    <scope>FUNCTION AS AN E3 UBIQUITIN-PROTEIN LIGASE</scope>
    <scope>INTERACTION WITH SMAD4</scope>
    <scope>MUTAGENESIS OF CYS-97 AND CYS-100</scope>
    <scope>SUBCELLULAR LOCATION</scope>
    <scope>DEVELOPMENTAL STAGE</scope>
</reference>
<keyword id="KW-0103">Bromodomain</keyword>
<keyword id="KW-0175">Coiled coil</keyword>
<keyword id="KW-0238">DNA-binding</keyword>
<keyword id="KW-0479">Metal-binding</keyword>
<keyword id="KW-0539">Nucleus</keyword>
<keyword id="KW-1185">Reference proteome</keyword>
<keyword id="KW-0677">Repeat</keyword>
<keyword id="KW-0678">Repressor</keyword>
<keyword id="KW-0804">Transcription</keyword>
<keyword id="KW-0805">Transcription regulation</keyword>
<keyword id="KW-0808">Transferase</keyword>
<keyword id="KW-0833">Ubl conjugation pathway</keyword>
<keyword id="KW-0862">Zinc</keyword>
<keyword id="KW-0863">Zinc-finger</keyword>
<comment type="function">
    <text evidence="1 8">Acts as an E3 ubiquitin-protein ligase for smad4. Promotes ectoderm embryonic development at the expense of other germ layers. Inhibits mesodermal differentiation. Promotes neural development of the ectoderm. Promotes smad4 alpha degradation via the ubiquitin proteasome pathway. May act as a transcriptional repressor (By similarity).</text>
</comment>
<comment type="catalytic activity">
    <reaction>
        <text>S-ubiquitinyl-[E2 ubiquitin-conjugating enzyme]-L-cysteine + [acceptor protein]-L-lysine = [E2 ubiquitin-conjugating enzyme]-L-cysteine + N(6)-ubiquitinyl-[acceptor protein]-L-lysine.</text>
        <dbReference type="EC" id="2.3.2.27"/>
    </reaction>
</comment>
<comment type="pathway">
    <text>Protein modification; protein ubiquitination.</text>
</comment>
<comment type="subunit">
    <text>May interact with smad4.</text>
</comment>
<comment type="subcellular location">
    <subcellularLocation>
        <location evidence="8">Nucleus</location>
    </subcellularLocation>
</comment>
<comment type="developmental stage">
    <text evidence="8">Expressed at the animal pole of unfertilized eggs and throughout cleavage stages in the prospective ectoderm germ layer. Expressed at the animal pole and extending up to the marginal zone at blastula stage. At the onset of gastrulation remains asymmetrically enriched in the dorsal side of the early gastrula. Its expression progressively diminishes as gastrulation proceeds (at protein level).</text>
</comment>
<gene>
    <name type="primary">trim33</name>
    <name type="synonym">ecto</name>
</gene>
<feature type="chain" id="PRO_0000287228" description="E3 ubiquitin-protein ligase TRIM33">
    <location>
        <begin position="1"/>
        <end position="1091"/>
    </location>
</feature>
<feature type="domain" description="Bromo" evidence="4">
    <location>
        <begin position="920"/>
        <end position="1043"/>
    </location>
</feature>
<feature type="zinc finger region" description="RING-type 1" evidence="6">
    <location>
        <begin position="97"/>
        <end position="154"/>
    </location>
</feature>
<feature type="zinc finger region" description="B box-type 1; atypical" evidence="3">
    <location>
        <begin position="180"/>
        <end position="227"/>
    </location>
</feature>
<feature type="zinc finger region" description="B box-type 2" evidence="3">
    <location>
        <begin position="240"/>
        <end position="281"/>
    </location>
</feature>
<feature type="zinc finger region" description="PHD-type" evidence="5">
    <location>
        <begin position="850"/>
        <end position="897"/>
    </location>
</feature>
<feature type="region of interest" description="Disordered" evidence="7">
    <location>
        <begin position="1"/>
        <end position="87"/>
    </location>
</feature>
<feature type="region of interest" description="Disordered" evidence="7">
    <location>
        <begin position="672"/>
        <end position="779"/>
    </location>
</feature>
<feature type="region of interest" description="Disordered" evidence="7">
    <location>
        <begin position="821"/>
        <end position="844"/>
    </location>
</feature>
<feature type="region of interest" description="Disordered" evidence="7">
    <location>
        <begin position="1051"/>
        <end position="1091"/>
    </location>
</feature>
<feature type="coiled-coil region" evidence="2">
    <location>
        <begin position="269"/>
        <end position="361"/>
    </location>
</feature>
<feature type="compositionally biased region" description="Gly residues" evidence="7">
    <location>
        <begin position="1"/>
        <end position="13"/>
    </location>
</feature>
<feature type="compositionally biased region" description="Low complexity" evidence="7">
    <location>
        <begin position="52"/>
        <end position="87"/>
    </location>
</feature>
<feature type="compositionally biased region" description="Low complexity" evidence="7">
    <location>
        <begin position="675"/>
        <end position="721"/>
    </location>
</feature>
<feature type="compositionally biased region" description="Basic and acidic residues" evidence="7">
    <location>
        <begin position="754"/>
        <end position="763"/>
    </location>
</feature>
<feature type="compositionally biased region" description="Low complexity" evidence="7">
    <location>
        <begin position="768"/>
        <end position="779"/>
    </location>
</feature>
<feature type="compositionally biased region" description="Acidic residues" evidence="7">
    <location>
        <begin position="1055"/>
        <end position="1073"/>
    </location>
</feature>
<feature type="compositionally biased region" description="Basic and acidic residues" evidence="7">
    <location>
        <begin position="1082"/>
        <end position="1091"/>
    </location>
</feature>
<feature type="binding site" evidence="3">
    <location>
        <position position="185"/>
    </location>
    <ligand>
        <name>Zn(2+)</name>
        <dbReference type="ChEBI" id="CHEBI:29105"/>
        <label>1</label>
    </ligand>
</feature>
<feature type="binding site" evidence="3">
    <location>
        <position position="188"/>
    </location>
    <ligand>
        <name>Zn(2+)</name>
        <dbReference type="ChEBI" id="CHEBI:29105"/>
        <label>1</label>
    </ligand>
</feature>
<feature type="binding site" evidence="3">
    <location>
        <position position="209"/>
    </location>
    <ligand>
        <name>Zn(2+)</name>
        <dbReference type="ChEBI" id="CHEBI:29105"/>
        <label>1</label>
    </ligand>
</feature>
<feature type="binding site" evidence="3">
    <location>
        <position position="213"/>
    </location>
    <ligand>
        <name>Zn(2+)</name>
        <dbReference type="ChEBI" id="CHEBI:29105"/>
        <label>1</label>
    </ligand>
</feature>
<feature type="binding site" evidence="3">
    <location>
        <position position="245"/>
    </location>
    <ligand>
        <name>Zn(2+)</name>
        <dbReference type="ChEBI" id="CHEBI:29105"/>
        <label>2</label>
    </ligand>
</feature>
<feature type="binding site" evidence="3">
    <location>
        <position position="248"/>
    </location>
    <ligand>
        <name>Zn(2+)</name>
        <dbReference type="ChEBI" id="CHEBI:29105"/>
        <label>2</label>
    </ligand>
</feature>
<feature type="binding site" evidence="3">
    <location>
        <position position="268"/>
    </location>
    <ligand>
        <name>Zn(2+)</name>
        <dbReference type="ChEBI" id="CHEBI:29105"/>
        <label>2</label>
    </ligand>
</feature>
<feature type="binding site" evidence="3">
    <location>
        <position position="273"/>
    </location>
    <ligand>
        <name>Zn(2+)</name>
        <dbReference type="ChEBI" id="CHEBI:29105"/>
        <label>2</label>
    </ligand>
</feature>
<feature type="mutagenesis site" description="Abolishes E3 activity but does not affect interaction with smad4; when associated with A-100." evidence="8">
    <original>C</original>
    <variation>A</variation>
    <location>
        <position position="97"/>
    </location>
</feature>
<feature type="mutagenesis site" description="Abolishes E3 activity but does not affect interaction with smad4; when associated with A-97." evidence="8">
    <original>C</original>
    <variation>A</variation>
    <location>
        <position position="100"/>
    </location>
</feature>
<proteinExistence type="evidence at protein level"/>
<name>TRI33_XENLA</name>
<protein>
    <recommendedName>
        <fullName>E3 ubiquitin-protein ligase TRIM33</fullName>
        <ecNumber>2.3.2.27</ecNumber>
    </recommendedName>
    <alternativeName>
        <fullName>Ectodermin</fullName>
    </alternativeName>
    <alternativeName>
        <fullName evidence="9">RING-type E3 ubiquitin transferase TRIM33</fullName>
    </alternativeName>
    <alternativeName>
        <fullName>Transcription intermediary factor 1-gamma</fullName>
        <shortName>TIF1-gamma</shortName>
    </alternativeName>
    <alternativeName>
        <fullName>Tripartite motif-containing protein 33</fullName>
    </alternativeName>
</protein>
<sequence length="1091" mass="120159">MADNKGGGGGGGETEGDASSNNNNNSNGAGETGSPGETESQAVEEPESAEKAPVAAVPTDTPAEENPAPSSSSVASSSATPASSSSSPLVVNLLDTCAVCKLSLQSRDTEPKLLPCLHSFCRRCLPEPERQLSVPGGTNGDIQQVGVIRCLVCRQECRQIDLVDNYFVKDASEAPNTDEKSEQVCTSCEDNASAVGFCVECGEWLCKTCIEAHQRVKFTKDHIITNKEDVSSESVGASGQRPVFCPVHKQEQLKLFCETCDRLTCRDCQLLEHKEHRYQFLEEAFQNQKGAIENLLAKLLEKKNYVHFAATQVQNRIKEVNETNKRVEQEIKVAIFTLINEINKKGKSLLQQLESVTKERQIKLVQQQNDITGLSRQIKHVMTFTNWAIASGSSTALLYSKRLITFQLRHILKARCDPVPAANGAIRFHCDPTFWAKNVVNLGNLVIENKPTTGFTPNVVVGQVPQGANHVNKPPAQINLAQLRLQHMQQQVYAQKQQQLQMRMAQPPGQHQRPSAPQVMHQQPPRLISMQSMPRNNMNCGPFQAHQMRMAQNAAQNAARMSGVPRHNGMQYSMMQPHLQRQHSNPGHAGPFPVVSVHNNTINPTSPTTATMANANRGPTSPSVTSIELIPSVTNPENLPSLPDIPPIQLEDAGSSNLDNLLSRYISLGHQLPQPTSNMNPSPAPSAMSPGSTGLSNSHTPVRPPSTSSTGSRGSCGSSSRTVERNSSFKSDPVKVKQEPGTEEEVCSFSGPVKQEKAEDGRRSACMLSSPESSLTPPLTTNVHLETDLESLAALENNVKTEPNNTSQSCRQSSHVSLVNGKSAVRNSMHRPPRGGGGGDGSNKDDDPNEDWCAVCQNGGDLLCCEKCPKVFHLTCHVPTLLSFPSGEWICTFCRDLNKPEVEYDCDNSQHSKKGKTVQGLSPVDQMKCERLLLYLYCHELSIEFQEPVPATIPNYYKIIKKPMDLSTVKKKLQKKHSQHYQTPEDFVADVRLIFKNCERFNEMMKVVQAYADTQEINLQNDSEVAQAGKAVVLYFEEKLPAIYPDRTFQPLPEFEAEDDDGDVTDDSDDDDFVQPRRKRLKSEERPVHIK</sequence>
<evidence type="ECO:0000250" key="1"/>
<evidence type="ECO:0000255" key="2"/>
<evidence type="ECO:0000255" key="3">
    <source>
        <dbReference type="PROSITE-ProRule" id="PRU00024"/>
    </source>
</evidence>
<evidence type="ECO:0000255" key="4">
    <source>
        <dbReference type="PROSITE-ProRule" id="PRU00035"/>
    </source>
</evidence>
<evidence type="ECO:0000255" key="5">
    <source>
        <dbReference type="PROSITE-ProRule" id="PRU00146"/>
    </source>
</evidence>
<evidence type="ECO:0000255" key="6">
    <source>
        <dbReference type="PROSITE-ProRule" id="PRU00175"/>
    </source>
</evidence>
<evidence type="ECO:0000256" key="7">
    <source>
        <dbReference type="SAM" id="MobiDB-lite"/>
    </source>
</evidence>
<evidence type="ECO:0000269" key="8">
    <source>
    </source>
</evidence>
<evidence type="ECO:0000305" key="9"/>
<accession>Q56R14</accession>